<name>CAPSD_MSVN</name>
<protein>
    <recommendedName>
        <fullName>Capsid protein</fullName>
    </recommendedName>
    <alternativeName>
        <fullName>Coat protein</fullName>
        <shortName>CP</shortName>
    </alternativeName>
</protein>
<comment type="function">
    <text evidence="1">Encapsidates the viral genome into characteristic twinned ('geminate') particles. Binds the genomic viral ssDNA and shuttles it into and out of the cell nucleus. Plays a role in protection of the genome from degradation, virus acquisition and transmission by insect vectors, infectivity, and systemic movement. The CP of monopartite geminiviruses is absolutely essential for virus movement (By similarity).</text>
</comment>
<comment type="subunit">
    <text evidence="1 4">Homomultimer. Interacts with the movement protein (By similarity). Binds to single-stranded and double-stranded viral DNA.</text>
</comment>
<comment type="subcellular location">
    <subcellularLocation>
        <location evidence="1">Virion</location>
    </subcellularLocation>
    <subcellularLocation>
        <location evidence="3">Host nucleus</location>
    </subcellularLocation>
    <text evidence="1">It is actively transported into the host cell nucleus. It may be exported out of the nucleus through a nuclear export signal for cell-to-cell movement and spread (By similarity).</text>
</comment>
<comment type="similarity">
    <text evidence="5">Belongs to the geminiviridae capsid protein family.</text>
</comment>
<evidence type="ECO:0000250" key="1"/>
<evidence type="ECO:0000256" key="2">
    <source>
        <dbReference type="SAM" id="MobiDB-lite"/>
    </source>
</evidence>
<evidence type="ECO:0000269" key="3">
    <source>
    </source>
</evidence>
<evidence type="ECO:0000269" key="4">
    <source>
    </source>
</evidence>
<evidence type="ECO:0000305" key="5"/>
<evidence type="ECO:0007829" key="6">
    <source>
        <dbReference type="PDB" id="8UGQ"/>
    </source>
</evidence>
<organismHost>
    <name type="scientific">Avena sativa</name>
    <name type="common">Oat</name>
    <dbReference type="NCBI Taxonomy" id="4498"/>
</organismHost>
<organismHost>
    <name type="scientific">Axonopus compressus</name>
    <dbReference type="NCBI Taxonomy" id="217170"/>
</organismHost>
<organismHost>
    <name type="scientific">Cenchrus americanus</name>
    <name type="common">Pearl millet</name>
    <name type="synonym">Pennisetum glaucum</name>
    <dbReference type="NCBI Taxonomy" id="4543"/>
</organismHost>
<organismHost>
    <name type="scientific">Cenchrus polystachios</name>
    <dbReference type="NCBI Taxonomy" id="281129"/>
</organismHost>
<organismHost>
    <name type="scientific">Coix lacryma-jobi</name>
    <name type="common">Job's tears</name>
    <dbReference type="NCBI Taxonomy" id="4505"/>
</organismHost>
<organismHost>
    <name type="scientific">Dactyloctenium aegyptium</name>
    <dbReference type="NCBI Taxonomy" id="270102"/>
</organismHost>
<organismHost>
    <name type="scientific">Digitaria</name>
    <dbReference type="NCBI Taxonomy" id="66017"/>
</organismHost>
<organismHost>
    <name type="scientific">Echinochloa colona</name>
    <dbReference type="NCBI Taxonomy" id="90396"/>
</organismHost>
<organismHost>
    <name type="scientific">Eleusine coracana</name>
    <name type="common">Indian finger millet</name>
    <name type="synonym">Ragi</name>
    <dbReference type="NCBI Taxonomy" id="4511"/>
</organismHost>
<organismHost>
    <name type="scientific">Eleusine indica</name>
    <name type="common">Goosegrass</name>
    <name type="synonym">Cynosurus indicus</name>
    <dbReference type="NCBI Taxonomy" id="29674"/>
</organismHost>
<organismHost>
    <name type="scientific">Hordeum vulgare</name>
    <name type="common">Barley</name>
    <dbReference type="NCBI Taxonomy" id="4513"/>
</organismHost>
<organismHost>
    <name type="scientific">Megathyrsus maximus</name>
    <dbReference type="NCBI Taxonomy" id="59788"/>
</organismHost>
<organismHost>
    <name type="scientific">Melinis repens</name>
    <name type="common">Red Natal grass</name>
    <name type="synonym">Rhynchelytrum repens</name>
    <dbReference type="NCBI Taxonomy" id="29709"/>
</organismHost>
<organismHost>
    <name type="scientific">Oryza glaberrima</name>
    <name type="common">African rice</name>
    <dbReference type="NCBI Taxonomy" id="4538"/>
</organismHost>
<organismHost>
    <name type="scientific">Oryza sativa</name>
    <name type="common">Rice</name>
    <dbReference type="NCBI Taxonomy" id="4530"/>
</organismHost>
<organismHost>
    <name type="scientific">Paspalum conjugatum</name>
    <name type="common">Hilo grass</name>
    <dbReference type="NCBI Taxonomy" id="158143"/>
</organismHost>
<organismHost>
    <name type="scientific">Paspalum notatum</name>
    <name type="common">Bahia grass</name>
    <dbReference type="NCBI Taxonomy" id="147272"/>
</organismHost>
<organismHost>
    <name type="scientific">Paspalum scrobiculatum</name>
    <dbReference type="NCBI Taxonomy" id="173849"/>
</organismHost>
<organismHost>
    <name type="scientific">Rottboellia cochinchinensis</name>
    <dbReference type="NCBI Taxonomy" id="300125"/>
</organismHost>
<organismHost>
    <name type="scientific">Saccharum officinarum</name>
    <name type="common">Sugarcane</name>
    <dbReference type="NCBI Taxonomy" id="4547"/>
</organismHost>
<organismHost>
    <name type="scientific">Setaria barbata</name>
    <dbReference type="NCBI Taxonomy" id="192628"/>
</organismHost>
<organismHost>
    <name type="scientific">Triticum aestivum</name>
    <name type="common">Wheat</name>
    <dbReference type="NCBI Taxonomy" id="4565"/>
</organismHost>
<organismHost>
    <name type="scientific">Urochloa deflexa</name>
    <dbReference type="NCBI Taxonomy" id="240436"/>
</organismHost>
<organismHost>
    <name type="scientific">Zea mays</name>
    <name type="common">Maize</name>
    <dbReference type="NCBI Taxonomy" id="4577"/>
</organismHost>
<keyword id="KW-0002">3D-structure</keyword>
<keyword id="KW-0167">Capsid protein</keyword>
<keyword id="KW-0238">DNA-binding</keyword>
<keyword id="KW-1048">Host nucleus</keyword>
<keyword id="KW-1140">T=1 icosahedral capsid protein</keyword>
<keyword id="KW-1163">Viral penetration into host nucleus</keyword>
<keyword id="KW-0946">Virion</keyword>
<keyword id="KW-1160">Virus entry into host cell</keyword>
<reference key="1">
    <citation type="journal article" date="1984" name="EMBO J.">
        <title>The nucleotide sequence of maize streak virus DNA.</title>
        <authorList>
            <person name="Mullineaux P.M."/>
            <person name="Donson J."/>
            <person name="Morris-Krsinich B.A.M."/>
            <person name="Boulton M.I."/>
            <person name="Davies J.W."/>
        </authorList>
    </citation>
    <scope>NUCLEOTIDE SEQUENCE [GENOMIC DNA]</scope>
</reference>
<reference key="2">
    <citation type="journal article" date="1999" name="Mol. Plant Microbe Interact.">
        <title>Maize streak virus coat protein is karyophyllic and facilitates nuclear transport of viral DNA.</title>
        <authorList>
            <person name="Liu H."/>
            <person name="Boulton M.I."/>
            <person name="Thomas C.L."/>
            <person name="Prior D.A.M."/>
            <person name="Oparka K.J."/>
            <person name="Davies J.W."/>
        </authorList>
    </citation>
    <scope>SUBCELLULAR LOCATION</scope>
    <scope>NUCLEAR LOCALIZATION SIGNAL</scope>
    <scope>DNA-BINDING</scope>
    <scope>MUTAGENESIS OF ARG-6; LYS-7; LYS-20 AND LYS-21</scope>
</reference>
<reference key="3">
    <citation type="journal article" date="2001" name="J. Gen. Virol.">
        <title>Interaction of the movement and coat proteins of Maize streak virus: implications for the transport of viral DNA.</title>
        <authorList>
            <person name="Liu H."/>
            <person name="Boulton M.I."/>
            <person name="Oparka K.J."/>
            <person name="Davies J.W."/>
        </authorList>
    </citation>
    <scope>INTERACTION WITH THE MOVEMENT PROTEIN</scope>
</reference>
<gene>
    <name type="ORF">V1</name>
</gene>
<organism>
    <name type="scientific">Maize streak virus genotype A (isolate Nigeria)</name>
    <name type="common">MSV</name>
    <dbReference type="NCBI Taxonomy" id="10823"/>
    <lineage>
        <taxon>Viruses</taxon>
        <taxon>Monodnaviria</taxon>
        <taxon>Shotokuvirae</taxon>
        <taxon>Cressdnaviricota</taxon>
        <taxon>Repensiviricetes</taxon>
        <taxon>Geplafuvirales</taxon>
        <taxon>Geminiviridae</taxon>
        <taxon>Mastrevirus</taxon>
        <taxon>Maize streak virus</taxon>
    </lineage>
</organism>
<dbReference type="EMBL" id="X01633">
    <property type="protein sequence ID" value="CAA25788.1"/>
    <property type="molecule type" value="Genomic_DNA"/>
</dbReference>
<dbReference type="PIR" id="A04173">
    <property type="entry name" value="VCCVSV"/>
</dbReference>
<dbReference type="PDB" id="8UGQ">
    <property type="method" value="EM"/>
    <property type="resolution" value="3.17 A"/>
    <property type="chains" value="A/B/C/D/E/F/G/H/I/J/K=1-243"/>
</dbReference>
<dbReference type="PDB" id="8UH4">
    <property type="method" value="EM"/>
    <property type="resolution" value="3.72 A"/>
    <property type="chains" value="1/2/3/4/5/6/7/8/A/B/C/D/E/F/G/H/I/J/K/L/M/N/O/P/Q/R/S/T/U/V=1-243"/>
</dbReference>
<dbReference type="PDBsum" id="8UGQ"/>
<dbReference type="PDBsum" id="8UH4"/>
<dbReference type="EMDB" id="EMD-42232"/>
<dbReference type="EMDB" id="EMD-42246"/>
<dbReference type="SMR" id="P06448"/>
<dbReference type="Proteomes" id="UP000007779">
    <property type="component" value="Genome"/>
</dbReference>
<dbReference type="GO" id="GO:0043657">
    <property type="term" value="C:host cell"/>
    <property type="evidence" value="ECO:0007669"/>
    <property type="project" value="GOC"/>
</dbReference>
<dbReference type="GO" id="GO:0042025">
    <property type="term" value="C:host cell nucleus"/>
    <property type="evidence" value="ECO:0007669"/>
    <property type="project" value="UniProtKB-SubCell"/>
</dbReference>
<dbReference type="GO" id="GO:0039615">
    <property type="term" value="C:T=1 icosahedral viral capsid"/>
    <property type="evidence" value="ECO:0007669"/>
    <property type="project" value="UniProtKB-KW"/>
</dbReference>
<dbReference type="GO" id="GO:0003677">
    <property type="term" value="F:DNA binding"/>
    <property type="evidence" value="ECO:0007669"/>
    <property type="project" value="UniProtKB-KW"/>
</dbReference>
<dbReference type="GO" id="GO:0005198">
    <property type="term" value="F:structural molecule activity"/>
    <property type="evidence" value="ECO:0007669"/>
    <property type="project" value="InterPro"/>
</dbReference>
<dbReference type="GO" id="GO:0046718">
    <property type="term" value="P:symbiont entry into host cell"/>
    <property type="evidence" value="ECO:0007669"/>
    <property type="project" value="UniProtKB-KW"/>
</dbReference>
<dbReference type="GO" id="GO:0075732">
    <property type="term" value="P:viral penetration into host nucleus"/>
    <property type="evidence" value="ECO:0007669"/>
    <property type="project" value="UniProtKB-KW"/>
</dbReference>
<dbReference type="Gene3D" id="2.60.120.20">
    <property type="match status" value="1"/>
</dbReference>
<dbReference type="InterPro" id="IPR000143">
    <property type="entry name" value="Gemcoat_MSV"/>
</dbReference>
<dbReference type="InterPro" id="IPR000263">
    <property type="entry name" value="GV_A/BR1_coat"/>
</dbReference>
<dbReference type="InterPro" id="IPR029053">
    <property type="entry name" value="Viral_coat"/>
</dbReference>
<dbReference type="Pfam" id="PF00844">
    <property type="entry name" value="Gemini_coat"/>
    <property type="match status" value="1"/>
</dbReference>
<dbReference type="PRINTS" id="PR00223">
    <property type="entry name" value="GEMCOATARBR1"/>
</dbReference>
<dbReference type="PRINTS" id="PR00226">
    <property type="entry name" value="GEMCOATMSV"/>
</dbReference>
<feature type="chain" id="PRO_0000222186" description="Capsid protein">
    <location>
        <begin position="1"/>
        <end position="244"/>
    </location>
</feature>
<feature type="region of interest" description="Disordered" evidence="2">
    <location>
        <begin position="1"/>
        <end position="39"/>
    </location>
</feature>
<feature type="short sequence motif" description="Bipartite nuclear localization signal">
    <location>
        <begin position="1"/>
        <end position="24"/>
    </location>
</feature>
<feature type="mutagenesis site" description="Abolishes nuclear localization; when associated with N-7; N-20 and N-21." evidence="3">
    <original>R</original>
    <variation>T</variation>
    <location>
        <position position="6"/>
    </location>
</feature>
<feature type="mutagenesis site" description="Abolishes nuclear localization; when associated with T-6; N-20 and N-21." evidence="3">
    <original>K</original>
    <variation>N</variation>
    <location>
        <position position="7"/>
    </location>
</feature>
<feature type="mutagenesis site" description="Abolishes nuclear localization; when associated with T-6; N-7 and N-21." evidence="3">
    <original>K</original>
    <variation>N</variation>
    <location>
        <position position="20"/>
    </location>
</feature>
<feature type="mutagenesis site" description="Abolishes nuclear localization; when associated with T-6; N-7 and N-20." evidence="3">
    <original>K</original>
    <variation>N</variation>
    <location>
        <position position="21"/>
    </location>
</feature>
<feature type="strand" evidence="6">
    <location>
        <begin position="41"/>
        <end position="48"/>
    </location>
</feature>
<feature type="strand" evidence="6">
    <location>
        <begin position="60"/>
        <end position="63"/>
    </location>
</feature>
<feature type="strand" evidence="6">
    <location>
        <begin position="69"/>
        <end position="72"/>
    </location>
</feature>
<feature type="strand" evidence="6">
    <location>
        <begin position="78"/>
        <end position="94"/>
    </location>
</feature>
<feature type="helix" evidence="6">
    <location>
        <begin position="98"/>
        <end position="100"/>
    </location>
</feature>
<feature type="strand" evidence="6">
    <location>
        <begin position="103"/>
        <end position="116"/>
    </location>
</feature>
<feature type="helix" evidence="6">
    <location>
        <begin position="124"/>
        <end position="127"/>
    </location>
</feature>
<feature type="helix" evidence="6">
    <location>
        <begin position="132"/>
        <end position="134"/>
    </location>
</feature>
<feature type="helix" evidence="6">
    <location>
        <begin position="138"/>
        <end position="140"/>
    </location>
</feature>
<feature type="turn" evidence="6">
    <location>
        <begin position="146"/>
        <end position="150"/>
    </location>
</feature>
<feature type="strand" evidence="6">
    <location>
        <begin position="151"/>
        <end position="163"/>
    </location>
</feature>
<feature type="strand" evidence="6">
    <location>
        <begin position="183"/>
        <end position="191"/>
    </location>
</feature>
<feature type="strand" evidence="6">
    <location>
        <begin position="196"/>
        <end position="200"/>
    </location>
</feature>
<feature type="strand" evidence="6">
    <location>
        <begin position="202"/>
        <end position="204"/>
    </location>
</feature>
<feature type="helix" evidence="6">
    <location>
        <begin position="208"/>
        <end position="210"/>
    </location>
</feature>
<feature type="strand" evidence="6">
    <location>
        <begin position="211"/>
        <end position="213"/>
    </location>
</feature>
<feature type="strand" evidence="6">
    <location>
        <begin position="215"/>
        <end position="221"/>
    </location>
</feature>
<feature type="strand" evidence="6">
    <location>
        <begin position="223"/>
        <end position="225"/>
    </location>
</feature>
<feature type="strand" evidence="6">
    <location>
        <begin position="228"/>
        <end position="241"/>
    </location>
</feature>
<accession>P06448</accession>
<proteinExistence type="evidence at protein level"/>
<sequence length="244" mass="26969">MSTSKRKRGDDSNWSKRVTKKKPSSAGLKRAGSKADRPSLQIQTLQHAGTTMITVPSGGVCDLINTYARGSDEGNRHTSETLTYKIAIDYHFVADAAACRYSNTGTGVMWLVYDTTPGGQAPTPQTIFAYPDTLKAWPATWKVSRELCHRFVVKRRWLFNMETDGRIGSDIPPSNASWKPCKRNIYFHKFTSGLGVRTQWKNVTDGGVGAIQRGALYMVIAPGNGLTFTAHGQTRLYFKSVGNQ</sequence>